<proteinExistence type="inferred from homology"/>
<feature type="chain" id="PRO_0000405222" description="Genome polyprotein">
    <location>
        <begin position="1"/>
        <end position="3390"/>
    </location>
</feature>
<feature type="chain" id="PRO_0000268043" description="Capsid protein C" evidence="6">
    <location>
        <begin position="1"/>
        <end position="100"/>
    </location>
</feature>
<feature type="propeptide" id="PRO_0000268044" description="ER anchor for the capsid protein C, removed in mature form by serine protease NS3" evidence="6">
    <location>
        <begin position="101"/>
        <end position="114"/>
    </location>
</feature>
<feature type="chain" id="PRO_0000268045" description="Protein prM" evidence="6">
    <location>
        <begin position="115"/>
        <end position="280"/>
    </location>
</feature>
<feature type="chain" id="PRO_0000268046" description="Peptide pr" evidence="6">
    <location>
        <begin position="115"/>
        <end position="205"/>
    </location>
</feature>
<feature type="chain" id="PRO_0000268047" description="Small envelope protein M" evidence="6">
    <location>
        <begin position="206"/>
        <end position="280"/>
    </location>
</feature>
<feature type="chain" id="PRO_0000268048" description="Envelope protein E" evidence="6">
    <location>
        <begin position="281"/>
        <end position="773"/>
    </location>
</feature>
<feature type="chain" id="PRO_0000268049" description="Non-structural protein 1" evidence="6">
    <location>
        <begin position="774"/>
        <end position="1125"/>
    </location>
</feature>
<feature type="chain" id="PRO_0000268050" description="Non-structural protein 2A" evidence="6">
    <location>
        <begin position="1126"/>
        <end position="1343"/>
    </location>
</feature>
<feature type="chain" id="PRO_0000268052" description="Serine protease subunit NS2B" evidence="6">
    <location>
        <begin position="1344"/>
        <end position="1473"/>
    </location>
</feature>
<feature type="chain" id="PRO_0000268053" description="Serine protease NS3" evidence="6">
    <location>
        <begin position="1474"/>
        <end position="2092"/>
    </location>
</feature>
<feature type="chain" id="PRO_0000268054" description="Non-structural protein 4A" evidence="6">
    <location>
        <begin position="2093"/>
        <end position="2219"/>
    </location>
</feature>
<feature type="peptide" id="PRO_0000268055" description="Peptide 2k" evidence="6">
    <location>
        <begin position="2220"/>
        <end position="2242"/>
    </location>
</feature>
<feature type="chain" id="PRO_0000268056" description="Non-structural protein 4B" evidence="6">
    <location>
        <begin position="2243"/>
        <end position="2490"/>
    </location>
</feature>
<feature type="chain" id="PRO_0000268057" description="RNA-directed RNA polymerase NS5" evidence="6">
    <location>
        <begin position="2491"/>
        <end position="3390"/>
    </location>
</feature>
<feature type="topological domain" description="Cytoplasmic" evidence="11">
    <location>
        <begin position="1"/>
        <end position="100"/>
    </location>
</feature>
<feature type="transmembrane region" description="Helical" evidence="11">
    <location>
        <begin position="101"/>
        <end position="118"/>
    </location>
</feature>
<feature type="topological domain" description="Extracellular" evidence="11">
    <location>
        <begin position="119"/>
        <end position="243"/>
    </location>
</feature>
<feature type="transmembrane region" description="Helical" evidence="11">
    <location>
        <begin position="244"/>
        <end position="264"/>
    </location>
</feature>
<feature type="topological domain" description="Cytoplasmic" evidence="11">
    <location>
        <position position="265"/>
    </location>
</feature>
<feature type="transmembrane region" description="Helical" evidence="11">
    <location>
        <begin position="266"/>
        <end position="280"/>
    </location>
</feature>
<feature type="topological domain" description="Extracellular" evidence="11">
    <location>
        <begin position="281"/>
        <end position="723"/>
    </location>
</feature>
<feature type="transmembrane region" description="Helical" evidence="11">
    <location>
        <begin position="724"/>
        <end position="744"/>
    </location>
</feature>
<feature type="topological domain" description="Cytoplasmic" evidence="11">
    <location>
        <begin position="745"/>
        <end position="750"/>
    </location>
</feature>
<feature type="transmembrane region" description="Helical" evidence="11">
    <location>
        <begin position="751"/>
        <end position="771"/>
    </location>
</feature>
<feature type="topological domain" description="Extracellular" evidence="11">
    <location>
        <begin position="772"/>
        <end position="1193"/>
    </location>
</feature>
<feature type="transmembrane region" description="Helical" evidence="11">
    <location>
        <begin position="1194"/>
        <end position="1218"/>
    </location>
</feature>
<feature type="topological domain" description="Cytoplasmic" evidence="11">
    <location>
        <begin position="1219"/>
        <end position="1224"/>
    </location>
</feature>
<feature type="transmembrane region" description="Helical" evidence="11">
    <location>
        <begin position="1225"/>
        <end position="1243"/>
    </location>
</feature>
<feature type="topological domain" description="Lumenal" evidence="11">
    <location>
        <begin position="1244"/>
        <end position="1267"/>
    </location>
</feature>
<feature type="transmembrane region" description="Helical" evidence="11">
    <location>
        <begin position="1268"/>
        <end position="1288"/>
    </location>
</feature>
<feature type="topological domain" description="Cytoplasmic" evidence="11">
    <location>
        <position position="1289"/>
    </location>
</feature>
<feature type="transmembrane region" description="Helical" evidence="11">
    <location>
        <begin position="1290"/>
        <end position="1308"/>
    </location>
</feature>
<feature type="topological domain" description="Lumenal" evidence="11">
    <location>
        <begin position="1309"/>
        <end position="1315"/>
    </location>
</feature>
<feature type="transmembrane region" description="Helical" evidence="11">
    <location>
        <begin position="1316"/>
        <end position="1336"/>
    </location>
</feature>
<feature type="topological domain" description="Cytoplasmic" evidence="11">
    <location>
        <begin position="1337"/>
        <end position="1344"/>
    </location>
</feature>
<feature type="transmembrane region" description="Helical" evidence="11">
    <location>
        <begin position="1345"/>
        <end position="1365"/>
    </location>
</feature>
<feature type="topological domain" description="Lumenal" evidence="11">
    <location>
        <begin position="1366"/>
        <end position="1368"/>
    </location>
</feature>
<feature type="transmembrane region" description="Helical" evidence="11">
    <location>
        <begin position="1369"/>
        <end position="1389"/>
    </location>
</feature>
<feature type="topological domain" description="Cytoplasmic" evidence="11">
    <location>
        <begin position="1390"/>
        <end position="1443"/>
    </location>
</feature>
<feature type="intramembrane region" description="Helical" evidence="11">
    <location>
        <begin position="1444"/>
        <end position="1464"/>
    </location>
</feature>
<feature type="topological domain" description="Cytoplasmic" evidence="11">
    <location>
        <begin position="1465"/>
        <end position="2146"/>
    </location>
</feature>
<feature type="transmembrane region" description="Helical" evidence="11">
    <location>
        <begin position="2147"/>
        <end position="2167"/>
    </location>
</feature>
<feature type="topological domain" description="Lumenal" evidence="11">
    <location>
        <begin position="2168"/>
        <end position="2169"/>
    </location>
</feature>
<feature type="intramembrane region" description="Helical" evidence="11">
    <location>
        <begin position="2170"/>
        <end position="2190"/>
    </location>
</feature>
<feature type="topological domain" description="Lumenal" evidence="11">
    <location>
        <position position="2191"/>
    </location>
</feature>
<feature type="transmembrane region" description="Helical" evidence="11">
    <location>
        <begin position="2192"/>
        <end position="2212"/>
    </location>
</feature>
<feature type="topological domain" description="Cytoplasmic" evidence="11">
    <location>
        <begin position="2213"/>
        <end position="2227"/>
    </location>
</feature>
<feature type="transmembrane region" description="Helical; Note=Signal for NS4B" evidence="11">
    <location>
        <begin position="2228"/>
        <end position="2248"/>
    </location>
</feature>
<feature type="topological domain" description="Lumenal" evidence="11">
    <location>
        <begin position="2249"/>
        <end position="2273"/>
    </location>
</feature>
<feature type="intramembrane region" description="Helical" evidence="11">
    <location>
        <begin position="2274"/>
        <end position="2294"/>
    </location>
</feature>
<feature type="topological domain" description="Lumenal" evidence="11">
    <location>
        <begin position="2295"/>
        <end position="2305"/>
    </location>
</feature>
<feature type="intramembrane region" description="Helical" evidence="11">
    <location>
        <begin position="2306"/>
        <end position="2326"/>
    </location>
</feature>
<feature type="topological domain" description="Lumenal" evidence="11">
    <location>
        <begin position="2327"/>
        <end position="2346"/>
    </location>
</feature>
<feature type="transmembrane region" description="Helical" evidence="11">
    <location>
        <begin position="2347"/>
        <end position="2367"/>
    </location>
</feature>
<feature type="topological domain" description="Cytoplasmic" evidence="11">
    <location>
        <begin position="2368"/>
        <end position="2412"/>
    </location>
</feature>
<feature type="transmembrane region" description="Helical" evidence="11">
    <location>
        <begin position="2413"/>
        <end position="2433"/>
    </location>
</feature>
<feature type="topological domain" description="Lumenal" evidence="11">
    <location>
        <begin position="2434"/>
        <end position="2458"/>
    </location>
</feature>
<feature type="transmembrane region" description="Helical" evidence="11">
    <location>
        <begin position="2459"/>
        <end position="2479"/>
    </location>
</feature>
<feature type="topological domain" description="Cytoplasmic" evidence="11">
    <location>
        <begin position="2480"/>
        <end position="3390"/>
    </location>
</feature>
<feature type="domain" description="Peptidase S7" evidence="17">
    <location>
        <begin position="1474"/>
        <end position="1651"/>
    </location>
</feature>
<feature type="domain" description="Helicase ATP-binding" evidence="14">
    <location>
        <begin position="1654"/>
        <end position="1810"/>
    </location>
</feature>
<feature type="domain" description="Helicase C-terminal" evidence="15">
    <location>
        <begin position="1821"/>
        <end position="1986"/>
    </location>
</feature>
<feature type="domain" description="mRNA cap 0-1 NS5-type MT" evidence="18">
    <location>
        <begin position="2492"/>
        <end position="2753"/>
    </location>
</feature>
<feature type="domain" description="RdRp catalytic" evidence="13">
    <location>
        <begin position="3018"/>
        <end position="3168"/>
    </location>
</feature>
<feature type="region of interest" description="Interaction with host EXOC1" evidence="5">
    <location>
        <begin position="1"/>
        <end position="15"/>
    </location>
</feature>
<feature type="region of interest" description="Hydrophobic; homodimerization of capsid protein C" evidence="6">
    <location>
        <begin position="37"/>
        <end position="72"/>
    </location>
</feature>
<feature type="region of interest" description="Fusion peptide" evidence="3">
    <location>
        <begin position="378"/>
        <end position="391"/>
    </location>
</feature>
<feature type="region of interest" description="Interacts with and activates NS3 protease" evidence="16">
    <location>
        <begin position="1396"/>
        <end position="1435"/>
    </location>
</feature>
<feature type="region of interest" description="Important for RNA-binding" evidence="4">
    <location>
        <begin position="1658"/>
        <end position="1661"/>
    </location>
</feature>
<feature type="short sequence motif" description="DEAH box" evidence="14">
    <location>
        <begin position="1758"/>
        <end position="1761"/>
    </location>
</feature>
<feature type="short sequence motif" description="SUMO-interacting motif" evidence="6">
    <location>
        <begin position="2567"/>
        <end position="2570"/>
    </location>
</feature>
<feature type="active site" description="Charge relay system; for serine protease NS3 activity" evidence="17">
    <location>
        <position position="1524"/>
    </location>
</feature>
<feature type="active site" description="Charge relay system; for serine protease NS3 activity" evidence="17">
    <location>
        <position position="1548"/>
    </location>
</feature>
<feature type="active site" description="Charge relay system; for serine protease NS3 activity" evidence="17">
    <location>
        <position position="1608"/>
    </location>
</feature>
<feature type="active site" description="For 2'-O-MTase activity" evidence="9">
    <location>
        <position position="2551"/>
    </location>
</feature>
<feature type="active site" description="For 2'-O-MTase activity" evidence="9">
    <location>
        <position position="2636"/>
    </location>
</feature>
<feature type="active site" description="For 2'-O-MTase activity" evidence="9">
    <location>
        <position position="2670"/>
    </location>
</feature>
<feature type="active site" description="For 2'-O-MTase activity" evidence="9">
    <location>
        <position position="2706"/>
    </location>
</feature>
<feature type="binding site" evidence="14">
    <location>
        <begin position="1667"/>
        <end position="1674"/>
    </location>
    <ligand>
        <name>ATP</name>
        <dbReference type="ChEBI" id="CHEBI:30616"/>
    </ligand>
</feature>
<feature type="binding site" evidence="18">
    <location>
        <position position="2546"/>
    </location>
    <ligand>
        <name>S-adenosyl-L-methionine</name>
        <dbReference type="ChEBI" id="CHEBI:59789"/>
    </ligand>
</feature>
<feature type="binding site" evidence="18">
    <location>
        <position position="2576"/>
    </location>
    <ligand>
        <name>S-adenosyl-L-methionine</name>
        <dbReference type="ChEBI" id="CHEBI:59789"/>
    </ligand>
</feature>
<feature type="binding site" evidence="18">
    <location>
        <position position="2577"/>
    </location>
    <ligand>
        <name>S-adenosyl-L-methionine</name>
        <dbReference type="ChEBI" id="CHEBI:59789"/>
    </ligand>
</feature>
<feature type="binding site" evidence="18">
    <location>
        <position position="2594"/>
    </location>
    <ligand>
        <name>S-adenosyl-L-methionine</name>
        <dbReference type="ChEBI" id="CHEBI:59789"/>
    </ligand>
</feature>
<feature type="binding site" evidence="18">
    <location>
        <position position="2595"/>
    </location>
    <ligand>
        <name>S-adenosyl-L-methionine</name>
        <dbReference type="ChEBI" id="CHEBI:59789"/>
    </ligand>
</feature>
<feature type="binding site" evidence="18">
    <location>
        <position position="2621"/>
    </location>
    <ligand>
        <name>S-adenosyl-L-methionine</name>
        <dbReference type="ChEBI" id="CHEBI:59789"/>
    </ligand>
</feature>
<feature type="binding site" evidence="18">
    <location>
        <position position="2622"/>
    </location>
    <ligand>
        <name>S-adenosyl-L-methionine</name>
        <dbReference type="ChEBI" id="CHEBI:59789"/>
    </ligand>
</feature>
<feature type="binding site" evidence="18">
    <location>
        <position position="2637"/>
    </location>
    <ligand>
        <name>S-adenosyl-L-methionine</name>
        <dbReference type="ChEBI" id="CHEBI:59789"/>
    </ligand>
</feature>
<feature type="binding site" evidence="18">
    <location>
        <position position="2708"/>
    </location>
    <ligand>
        <name>S-adenosyl-L-methionine</name>
        <dbReference type="ChEBI" id="CHEBI:59789"/>
    </ligand>
</feature>
<feature type="binding site" evidence="9">
    <location>
        <position position="2927"/>
    </location>
    <ligand>
        <name>Zn(2+)</name>
        <dbReference type="ChEBI" id="CHEBI:29105"/>
        <label>1</label>
    </ligand>
</feature>
<feature type="binding site" evidence="9">
    <location>
        <position position="2931"/>
    </location>
    <ligand>
        <name>Zn(2+)</name>
        <dbReference type="ChEBI" id="CHEBI:29105"/>
        <label>1</label>
    </ligand>
</feature>
<feature type="binding site" evidence="9">
    <location>
        <position position="2936"/>
    </location>
    <ligand>
        <name>Zn(2+)</name>
        <dbReference type="ChEBI" id="CHEBI:29105"/>
        <label>1</label>
    </ligand>
</feature>
<feature type="binding site" evidence="9">
    <location>
        <position position="2939"/>
    </location>
    <ligand>
        <name>Zn(2+)</name>
        <dbReference type="ChEBI" id="CHEBI:29105"/>
        <label>1</label>
    </ligand>
</feature>
<feature type="binding site" evidence="9">
    <location>
        <position position="3202"/>
    </location>
    <ligand>
        <name>Zn(2+)</name>
        <dbReference type="ChEBI" id="CHEBI:29105"/>
        <label>2</label>
    </ligand>
</feature>
<feature type="binding site" evidence="9">
    <location>
        <position position="3218"/>
    </location>
    <ligand>
        <name>Zn(2+)</name>
        <dbReference type="ChEBI" id="CHEBI:29105"/>
        <label>2</label>
    </ligand>
</feature>
<feature type="binding site" evidence="9">
    <location>
        <position position="3337"/>
    </location>
    <ligand>
        <name>Zn(2+)</name>
        <dbReference type="ChEBI" id="CHEBI:29105"/>
        <label>2</label>
    </ligand>
</feature>
<feature type="site" description="Cleavage; by viral protease NS3" evidence="6">
    <location>
        <begin position="100"/>
        <end position="101"/>
    </location>
</feature>
<feature type="site" description="Cleavage; by host signal peptidase" evidence="6">
    <location>
        <begin position="114"/>
        <end position="115"/>
    </location>
</feature>
<feature type="site" description="Cleavage; by host furin" evidence="6 11">
    <location>
        <begin position="205"/>
        <end position="206"/>
    </location>
</feature>
<feature type="site" description="Cleavage; by host signal peptidase" evidence="6">
    <location>
        <begin position="280"/>
        <end position="281"/>
    </location>
</feature>
<feature type="site" description="Cleavage; by host signal peptidase" evidence="6">
    <location>
        <begin position="773"/>
        <end position="774"/>
    </location>
</feature>
<feature type="site" description="Cleavage; by host" evidence="6">
    <location>
        <begin position="1125"/>
        <end position="1126"/>
    </location>
</feature>
<feature type="site" description="Cleavage; by viral protease NS3" evidence="6">
    <location>
        <begin position="1343"/>
        <end position="1344"/>
    </location>
</feature>
<feature type="site" description="Cleavage; by autolysis" evidence="6">
    <location>
        <begin position="1473"/>
        <end position="1474"/>
    </location>
</feature>
<feature type="site" description="Involved in NS3 ATPase and RTPase activities" evidence="2">
    <location>
        <position position="1931"/>
    </location>
</feature>
<feature type="site" description="Involved in NS3 ATPase and RTPase activities" evidence="2">
    <location>
        <position position="1934"/>
    </location>
</feature>
<feature type="site" description="Cleavage; by autolysis" evidence="6">
    <location>
        <begin position="2092"/>
        <end position="2093"/>
    </location>
</feature>
<feature type="site" description="Cleavage; by viral protease NS3" evidence="6">
    <location>
        <begin position="2219"/>
        <end position="2220"/>
    </location>
</feature>
<feature type="site" description="Cleavage; by host signal peptidase" evidence="6">
    <location>
        <begin position="2242"/>
        <end position="2243"/>
    </location>
</feature>
<feature type="site" description="Cleavage; by viral protease NS3" evidence="6">
    <location>
        <begin position="2490"/>
        <end position="2491"/>
    </location>
</feature>
<feature type="site" description="mRNA cap binding" evidence="18">
    <location>
        <position position="2504"/>
    </location>
</feature>
<feature type="site" description="mRNA cap binding; via carbonyl oxygen" evidence="18">
    <location>
        <position position="2507"/>
    </location>
</feature>
<feature type="site" description="mRNA cap binding" evidence="18">
    <location>
        <position position="2508"/>
    </location>
</feature>
<feature type="site" description="mRNA cap binding; via carbonyl oxygen" evidence="18">
    <location>
        <position position="2510"/>
    </location>
</feature>
<feature type="site" description="mRNA cap binding" evidence="18">
    <location>
        <position position="2515"/>
    </location>
</feature>
<feature type="site" description="mRNA cap binding" evidence="18">
    <location>
        <position position="2519"/>
    </location>
</feature>
<feature type="site" description="Essential for 2'-O-methyltransferase activity" evidence="18">
    <location>
        <position position="2551"/>
    </location>
</feature>
<feature type="site" description="Essential for 2'-O-methyltransferase and N-7 methyltransferase activity" evidence="18">
    <location>
        <position position="2636"/>
    </location>
</feature>
<feature type="site" description="mRNA cap binding" evidence="18">
    <location>
        <position position="2640"/>
    </location>
</feature>
<feature type="site" description="Essential for 2'-O-methyltransferase activity" evidence="18">
    <location>
        <position position="2670"/>
    </location>
</feature>
<feature type="site" description="mRNA cap binding" evidence="18">
    <location>
        <position position="2701"/>
    </location>
</feature>
<feature type="site" description="mRNA cap binding" evidence="18">
    <location>
        <position position="2703"/>
    </location>
</feature>
<feature type="site" description="Essential for 2'-O-methyltransferase activity" evidence="18">
    <location>
        <position position="2706"/>
    </location>
</feature>
<feature type="modified residue" description="N6-acetyllysine; by host" evidence="8">
    <location>
        <position position="1862"/>
    </location>
</feature>
<feature type="modified residue" description="Phosphoserine" evidence="1">
    <location>
        <position position="2546"/>
    </location>
</feature>
<feature type="glycosylation site" description="N-linked (GlcNAc...) asparagine; by host" evidence="12">
    <location>
        <position position="183"/>
    </location>
</feature>
<feature type="glycosylation site" description="N-linked (GlcNAc...) asparagine; by host" evidence="12">
    <location>
        <position position="347"/>
    </location>
</feature>
<feature type="glycosylation site" description="N-linked (GlcNAc...) asparagine; by host" evidence="12">
    <location>
        <position position="433"/>
    </location>
</feature>
<feature type="glycosylation site" description="N-linked (GlcNAc...) asparagine; by host" evidence="12">
    <location>
        <position position="903"/>
    </location>
</feature>
<feature type="glycosylation site" description="N-linked (GlcNAc...) asparagine; by host" evidence="12">
    <location>
        <position position="980"/>
    </location>
</feature>
<feature type="glycosylation site" description="N-linked (GlcNAc...) asparagine; by host" evidence="12">
    <location>
        <position position="1132"/>
    </location>
</feature>
<feature type="glycosylation site" description="N-linked (GlcNAc...) asparagine; by host" evidence="12">
    <location>
        <position position="1188"/>
    </location>
</feature>
<feature type="glycosylation site" description="N-linked (GlcNAc...) asparagine; by host" evidence="12">
    <location>
        <position position="2300"/>
    </location>
</feature>
<feature type="glycosylation site" description="N-linked (GlcNAc...) asparagine; by host" evidence="12">
    <location>
        <position position="2304"/>
    </location>
</feature>
<feature type="glycosylation site" description="N-linked (GlcNAc...) asparagine; by host" evidence="12">
    <location>
        <position position="2456"/>
    </location>
</feature>
<feature type="disulfide bond" evidence="5">
    <location>
        <begin position="283"/>
        <end position="310"/>
    </location>
</feature>
<feature type="disulfide bond" evidence="5">
    <location>
        <begin position="340"/>
        <end position="401"/>
    </location>
</feature>
<feature type="disulfide bond" evidence="5">
    <location>
        <begin position="354"/>
        <end position="385"/>
    </location>
</feature>
<feature type="disulfide bond" evidence="5">
    <location>
        <begin position="372"/>
        <end position="396"/>
    </location>
</feature>
<feature type="disulfide bond" evidence="5">
    <location>
        <begin position="463"/>
        <end position="563"/>
    </location>
</feature>
<feature type="disulfide bond" evidence="5">
    <location>
        <begin position="580"/>
        <end position="611"/>
    </location>
</feature>
<feature type="disulfide bond" evidence="5">
    <location>
        <begin position="777"/>
        <end position="788"/>
    </location>
</feature>
<feature type="disulfide bond" evidence="5">
    <location>
        <begin position="828"/>
        <end position="916"/>
    </location>
</feature>
<feature type="disulfide bond" evidence="5">
    <location>
        <begin position="952"/>
        <end position="996"/>
    </location>
</feature>
<feature type="disulfide bond" evidence="5">
    <location>
        <begin position="1053"/>
        <end position="1102"/>
    </location>
</feature>
<feature type="disulfide bond" evidence="5">
    <location>
        <begin position="1064"/>
        <end position="1086"/>
    </location>
</feature>
<feature type="disulfide bond" evidence="5">
    <location>
        <begin position="1085"/>
        <end position="1089"/>
    </location>
</feature>
<organism>
    <name type="scientific">Dengue virus type 3 (strain China/80-2/1980)</name>
    <name type="common">DENV-3</name>
    <dbReference type="NCBI Taxonomy" id="408690"/>
    <lineage>
        <taxon>Viruses</taxon>
        <taxon>Riboviria</taxon>
        <taxon>Orthornavirae</taxon>
        <taxon>Kitrinoviricota</taxon>
        <taxon>Flasuviricetes</taxon>
        <taxon>Amarillovirales</taxon>
        <taxon>Flaviviridae</taxon>
        <taxon>Orthoflavivirus</taxon>
        <taxon>Orthoflavivirus denguei</taxon>
        <taxon>Dengue virus</taxon>
    </lineage>
</organism>
<evidence type="ECO:0000250" key="1">
    <source>
        <dbReference type="UniProtKB" id="P03314"/>
    </source>
</evidence>
<evidence type="ECO:0000250" key="2">
    <source>
        <dbReference type="UniProtKB" id="P14335"/>
    </source>
</evidence>
<evidence type="ECO:0000250" key="3">
    <source>
        <dbReference type="UniProtKB" id="P14336"/>
    </source>
</evidence>
<evidence type="ECO:0000250" key="4">
    <source>
        <dbReference type="UniProtKB" id="P14340"/>
    </source>
</evidence>
<evidence type="ECO:0000250" key="5">
    <source>
        <dbReference type="UniProtKB" id="P17763"/>
    </source>
</evidence>
<evidence type="ECO:0000250" key="6">
    <source>
        <dbReference type="UniProtKB" id="P29990"/>
    </source>
</evidence>
<evidence type="ECO:0000250" key="7">
    <source>
        <dbReference type="UniProtKB" id="P29991"/>
    </source>
</evidence>
<evidence type="ECO:0000250" key="8">
    <source>
        <dbReference type="UniProtKB" id="Q32ZE1"/>
    </source>
</evidence>
<evidence type="ECO:0000250" key="9">
    <source>
        <dbReference type="UniProtKB" id="Q6YMS4"/>
    </source>
</evidence>
<evidence type="ECO:0000250" key="10">
    <source>
        <dbReference type="UniProtKB" id="Q9Q6P4"/>
    </source>
</evidence>
<evidence type="ECO:0000255" key="11"/>
<evidence type="ECO:0000255" key="12">
    <source>
        <dbReference type="PROSITE-ProRule" id="PRU00498"/>
    </source>
</evidence>
<evidence type="ECO:0000255" key="13">
    <source>
        <dbReference type="PROSITE-ProRule" id="PRU00539"/>
    </source>
</evidence>
<evidence type="ECO:0000255" key="14">
    <source>
        <dbReference type="PROSITE-ProRule" id="PRU00541"/>
    </source>
</evidence>
<evidence type="ECO:0000255" key="15">
    <source>
        <dbReference type="PROSITE-ProRule" id="PRU00542"/>
    </source>
</evidence>
<evidence type="ECO:0000255" key="16">
    <source>
        <dbReference type="PROSITE-ProRule" id="PRU00859"/>
    </source>
</evidence>
<evidence type="ECO:0000255" key="17">
    <source>
        <dbReference type="PROSITE-ProRule" id="PRU00860"/>
    </source>
</evidence>
<evidence type="ECO:0000255" key="18">
    <source>
        <dbReference type="PROSITE-ProRule" id="PRU00924"/>
    </source>
</evidence>
<keyword id="KW-0007">Acetylation</keyword>
<keyword id="KW-1072">Activation of host autophagy by virus</keyword>
<keyword id="KW-0067">ATP-binding</keyword>
<keyword id="KW-0167">Capsid protein</keyword>
<keyword id="KW-1165">Clathrin-mediated endocytosis of virus by host</keyword>
<keyword id="KW-0165">Cleavage on pair of basic residues</keyword>
<keyword id="KW-1015">Disulfide bond</keyword>
<keyword id="KW-1170">Fusion of virus membrane with host endosomal membrane</keyword>
<keyword id="KW-1168">Fusion of virus membrane with host membrane</keyword>
<keyword id="KW-0325">Glycoprotein</keyword>
<keyword id="KW-0347">Helicase</keyword>
<keyword id="KW-1035">Host cytoplasm</keyword>
<keyword id="KW-1038">Host endoplasmic reticulum</keyword>
<keyword id="KW-1043">Host membrane</keyword>
<keyword id="KW-1045">Host mitochondrion</keyword>
<keyword id="KW-1048">Host nucleus</keyword>
<keyword id="KW-0945">Host-virus interaction</keyword>
<keyword id="KW-0378">Hydrolase</keyword>
<keyword id="KW-1090">Inhibition of host innate immune response by virus</keyword>
<keyword id="KW-1114">Inhibition of host interferon signaling pathway by virus</keyword>
<keyword id="KW-1097">Inhibition of host MAVS by virus</keyword>
<keyword id="KW-1113">Inhibition of host RLR pathway by virus</keyword>
<keyword id="KW-1106">Inhibition of host STAT2 by virus</keyword>
<keyword id="KW-1112">Inhibition of host TYK2 by virus</keyword>
<keyword id="KW-0922">Interferon antiviral system evasion</keyword>
<keyword id="KW-0407">Ion channel</keyword>
<keyword id="KW-0406">Ion transport</keyword>
<keyword id="KW-0472">Membrane</keyword>
<keyword id="KW-0479">Metal-binding</keyword>
<keyword id="KW-0489">Methyltransferase</keyword>
<keyword id="KW-0506">mRNA capping</keyword>
<keyword id="KW-0507">mRNA processing</keyword>
<keyword id="KW-0511">Multifunctional enzyme</keyword>
<keyword id="KW-0547">Nucleotide-binding</keyword>
<keyword id="KW-0548">Nucleotidyltransferase</keyword>
<keyword id="KW-0597">Phosphoprotein</keyword>
<keyword id="KW-0645">Protease</keyword>
<keyword id="KW-0694">RNA-binding</keyword>
<keyword id="KW-0696">RNA-directed RNA polymerase</keyword>
<keyword id="KW-0949">S-adenosyl-L-methionine</keyword>
<keyword id="KW-0964">Secreted</keyword>
<keyword id="KW-0720">Serine protease</keyword>
<keyword id="KW-0941">Suppressor of RNA silencing</keyword>
<keyword id="KW-0804">Transcription</keyword>
<keyword id="KW-0805">Transcription regulation</keyword>
<keyword id="KW-0808">Transferase</keyword>
<keyword id="KW-0812">Transmembrane</keyword>
<keyword id="KW-1133">Transmembrane helix</keyword>
<keyword id="KW-0813">Transport</keyword>
<keyword id="KW-0832">Ubl conjugation</keyword>
<keyword id="KW-1161">Viral attachment to host cell</keyword>
<keyword id="KW-0261">Viral envelope protein</keyword>
<keyword id="KW-0899">Viral immunoevasion</keyword>
<keyword id="KW-1182">Viral ion channel</keyword>
<keyword id="KW-1162">Viral penetration into host cytoplasm</keyword>
<keyword id="KW-0693">Viral RNA replication</keyword>
<keyword id="KW-0946">Virion</keyword>
<keyword id="KW-1164">Virus endocytosis by host</keyword>
<keyword id="KW-1160">Virus entry into host cell</keyword>
<keyword id="KW-0862">Zinc</keyword>
<name>POLG_DEN3C</name>
<protein>
    <recommendedName>
        <fullName>Genome polyprotein</fullName>
    </recommendedName>
    <component>
        <recommendedName>
            <fullName>Capsid protein C</fullName>
        </recommendedName>
        <alternativeName>
            <fullName>Core protein</fullName>
        </alternativeName>
    </component>
    <component>
        <recommendedName>
            <fullName>Protein prM</fullName>
        </recommendedName>
    </component>
    <component>
        <recommendedName>
            <fullName>Peptide pr</fullName>
        </recommendedName>
    </component>
    <component>
        <recommendedName>
            <fullName>Small envelope protein M</fullName>
        </recommendedName>
        <alternativeName>
            <fullName>Matrix protein</fullName>
        </alternativeName>
    </component>
    <component>
        <recommendedName>
            <fullName>Envelope protein E</fullName>
        </recommendedName>
    </component>
    <component>
        <recommendedName>
            <fullName>Non-structural protein 1</fullName>
            <shortName>NS1</shortName>
        </recommendedName>
    </component>
    <component>
        <recommendedName>
            <fullName>Non-structural protein 2A</fullName>
            <shortName>NS2A</shortName>
        </recommendedName>
    </component>
    <component>
        <recommendedName>
            <fullName>Serine protease subunit NS2B</fullName>
        </recommendedName>
        <alternativeName>
            <fullName>Flavivirin protease NS2B regulatory subunit</fullName>
        </alternativeName>
        <alternativeName>
            <fullName>Non-structural protein 2B</fullName>
        </alternativeName>
    </component>
    <component>
        <recommendedName>
            <fullName>Serine protease NS3</fullName>
            <ecNumber>3.4.21.91</ecNumber>
            <ecNumber evidence="10">3.6.1.15</ecNumber>
            <ecNumber evidence="10">3.6.4.13</ecNumber>
        </recommendedName>
        <alternativeName>
            <fullName>Flavivirin protease NS3 catalytic subunit</fullName>
        </alternativeName>
        <alternativeName>
            <fullName>Non-structural protein 3</fullName>
        </alternativeName>
    </component>
    <component>
        <recommendedName>
            <fullName>Non-structural protein 4A</fullName>
            <shortName>NS4A</shortName>
        </recommendedName>
    </component>
    <component>
        <recommendedName>
            <fullName>Peptide 2k</fullName>
        </recommendedName>
    </component>
    <component>
        <recommendedName>
            <fullName>Non-structural protein 4B</fullName>
            <shortName>NS4B</shortName>
        </recommendedName>
    </component>
    <component>
        <recommendedName>
            <fullName>RNA-directed RNA polymerase NS5</fullName>
            <ecNumber evidence="18">2.1.1.56</ecNumber>
            <ecNumber evidence="18">2.1.1.57</ecNumber>
            <ecNumber evidence="13">2.7.7.48</ecNumber>
        </recommendedName>
        <alternativeName>
            <fullName>Non-structural protein 5</fullName>
        </alternativeName>
    </component>
</protein>
<accession>Q99D35</accession>
<sequence>MNNQRKKTGKPSINMLKRVRNRVSTGSQLAKRFSRGLLNGQGPMKLVMAFIAFLRFLAIPPTAGVLARWGTFKKSGAIKVLKGFKKEISNMLSIINKRKKTSLCLMMMLPATLAFHLTSRDGEPRMIVGKNERGKSLLFKTASGINMCTLIAMDLGEMCDDTVTYKCPHITEVEPEDIDCWCNLTSTWVTYGTCNQAGEHRRDKRSVALAPHVGMGLDTRTQTWMSAEGAWRQVEKVETWALRHPGFTILALFLAHYIGTSLTQKVVIFILLMLVTPSMTMRCVGVGNRDFVEGLSGATWVDVVLEHGGCVTTMAKNKPTLDIELQKTEATQLATLRKLCIEGKITNITTDSRCPTQGEAILPEEQDQNYVCKHTYVDRGWGNGCGLFGKGSLVTCAKFQCLESIEGKVVQHENLKYTVIITVHTGDQHQVGNETQGVTAEITSQASTAEAILPEYGTLGLECSPRTGLDFNEMILLTMKNKAWMVHRQWFFDLPLPWTSGATTKTPTWNRKELLVTFKNAHAKKQEVVVLGSQEGAMHTALTGATEIQTLGGTSIFAGHLKCRLKMDKLELKGMSYAMCLNTFVLKKEVSETQHGTILIKVEYKGEDAPCKIPFSTEDGQGKAHNGRLITANPVVTKKEEPVNIEAEPPFGESNIVIGIGDKALKINWYRKGSSIGKMFEATARGARRMAILGDTAWDFGSVGGVLNSLGKMVHQIFGSAYTALFSGVSWIMKIGIGVLLTWIGLNSKNTSMSFSCIAIGIITLYLGVVVQADMGCVINWKGKELKCGSGIFVTNEVHTWTEQYKFQADSPKRLATAIAGAWENGVCGIRSTTRMENLLWKQIANELNYILWENNIKLTVVVGDITGVLEQGKRTLTPQPMELKYSWKTWGKAKIVTAETQNSSFIIDGPSTPECPSASRAWNVWEVEDYGFGVFTTNIWLKLREVYTQLCDHRLMSAAVKDERAVHADMGYWIESQKNGSWKLEKASLIEVKTCTWPKSHTLWSNGVLESDMIIPKSLAGPISQHNHRPGYHTQTAGPWHLGKLELDFNYCEGTTVVISENCGTRGPSLRTTTVSGKLIHEWCCRSCTLPPLRYMGEDGCWYGMEIRPINEKEENMVKSLASAGSGKVDNFTMGVLCLAILFEEVMRGKFGKKHMIAGVLFTFVLLLSGQITWRDMAHTLIMIGSNASDRMGMGVTYLALIATFKIQPFLALGFFLRKLTSRENLLLGVGLAMAATLRLPEDIEQMANGIALGLMALKLITQFETYQLWTALVSLTCSNTIFTLTVAWRTATLILAGISLLPVCQSSSMRKTDWLPMTVAAMGVPPLPLFIFSLKDTLKRRSWPLNEGVMAVGLVSILASSLLRNDVPMAGPLVAGGLLIACYVITGTSADLTVEKAADVTWEEEAEQTGVSHNLMITVDDDGTMRIKDDETENILTVLLKTALLIVSGIFPCSIPATLLVWHTWQKQTQRSGVLWDVPSPPETQKAELEEGVYRIKQQGIFGKTQVGVGVQKEGVFHTMWHVTRGAVLTHNGKRLEPNWASVKKDLISYGGGWRLSAQWQKGEEVQVIAVEPGKNPKNFQTMPGIFQTTTGEIGAIALDFKPGTSGSPIINREGKVVGLYGNGVVTKNGGYVSGIAQTNAEPDGPTPELEEEMFKKRNLTIMDLHPGSGKTRKYLPAIVREAIKRRLRTLILAPTRVVAAEMEEALKGLPIRYQTTATKSEHTGREIVDLMCHATFTMRLLSPVRVPNYNLIIMDEAHFTDPASIAARGYISTRVGMGEAAAIFMTATPPGTADAFPQSNAPIQDEERDIPERSWNSGNEWITDFVGKTVWFVPSIKAGNDIANCLRKNGKKVIQLSRKTFDTEYQKTKLNDWDFVVTTDISEMGANFKADRVIDPRRCLKPVILTDGPERVILAGPMPVTVASAAQRRGRVGRNPQKENDQYIFMGQPLNKDEDHAHWTEAKMLLDNINTPEGIIPALFEPEREKSAAIDGEYRLKGESRKTFVELMRRGDLPVWLAHKVASEGIKYTDRKWCFDGERNNQILEENMDVEIWTKEGEKKKLRPRWLDARTYSDPLALKEFKDFAAGRKSIALDLVTEIGRVPSHLAHRTRNALDNLVMLHTSEHGGRAYRHAVEELPETMETLLLLGLMILLTGGAMLFLISGKGIGKTSIGLICVIASSGMLWMADVPLQWIASAIVLEFFMMVLLIPEPEKQRTPQDNQLAYVVIGILTLAAIVAANEMGLLETTKRDLGMSKEPGVVSPTSYLDVDLHPASAWTLYAVATTVITPMLRHTIENSTANVSLAAIANQAVVLMGLDKGWPISKMDLGVPLLALGCYSQVNPLTLIAAVLLLVTHYAIIGPGLQAKATREAQKRTAAGIMKNPTVDGIMTIDLDPVIYDSKFEKQLGQVMLLVLCAVQLLLMRTSWALCEVLTLATGPITTLWEGSPGKFWNTTIAVSMANIFRGSYLAGAGLAFSIMKSVGTGKRGTGSQGETLGEKWKKKLNQLSRKEFDLYKKSGITEVDRTEAKEGLKRGEITHHAVSRGSAKLQWFVERNMVIPEGRVIDLGCGRGGWSYYCAGLKKVTEVRGYTKGGPGHEEPVPMSTYGWNIVKLMSGKDVFYLPPEKCDTLLCDIGESSPSPTVEESRTIRVLKMVEPWLKNNQFCIKVLNPYMPTVIEHLERLQRKHGGMLVRNPLSRNSTHEMYWISNGTGNIVSSVNMVSRLLLNRFTMTHRRPTIEKDVDLGAGTRHVNAEPETPNMDVIGERIKRIKEEHSSTWHYDDENPYKTWAYHGSYEVKATGSASSMINGVVKLLTKPWDVVPMVTQMAMTDTTPFGQQRVFKEKVDTRTPRPMPGTRKVMEITAEWLWRTLGRNKRPRLCTREEFTKKVRTNAAMGAVFTEENQWDSARAAVEDEEFWKLVDRERELHKLGKCGSCVYNMMGKREKKLGEFGKAKGSRAIWYMWLGARYLEFEALGFLNEDHWFSRENSYSGVEGEGLHKLGYILRDISKIPGGAMYADDTAGWDTRITEDDLHNEEKITQQMDPEHRQLANAIFKLTYQNKVVKVQRPTPKGTVMDIISRKDQRGSGQVGTYGLNTFTNMEAQLIRQMEGEGVLSKADLENPHPLEKKITQWLETKGVERLKRMAISGDDCVVKPIDDRFANALLALNDMGKVRKDIPQWQPSKGWHDWQQVPFCSHHFHELIMKDGRKLVVPCRPQDELIGRARISQGAGWSLRETACLGKAYAQMWTLMYFHRRDLRLASNAICSAVPVHWVPTSRTTWSIHAHHQWMTTEDMLTVWNRVWIEDNPWMEDKTPITTWEDVPYLGKREDQWCGSLIGLTSRATWAQNILTAIQQVRSLIGNEEFLDYMPSMKRFRKEEESEGAIW</sequence>
<dbReference type="EC" id="3.4.21.91"/>
<dbReference type="EC" id="3.6.1.15" evidence="10"/>
<dbReference type="EC" id="3.6.4.13" evidence="10"/>
<dbReference type="EC" id="2.1.1.56" evidence="18"/>
<dbReference type="EC" id="2.1.1.57" evidence="18"/>
<dbReference type="EC" id="2.7.7.48" evidence="13"/>
<dbReference type="EMBL" id="AF317645">
    <property type="protein sequence ID" value="AAK01920.1"/>
    <property type="molecule type" value="Genomic_RNA"/>
</dbReference>
<dbReference type="SMR" id="Q99D35"/>
<dbReference type="MEROPS" id="S07.001"/>
<dbReference type="ABCD" id="Q99D35">
    <property type="antibodies" value="1 sequenced antibody"/>
</dbReference>
<dbReference type="PRO" id="PR:Q99D35"/>
<dbReference type="Proteomes" id="UP000007198">
    <property type="component" value="Genome"/>
</dbReference>
<dbReference type="GO" id="GO:0005576">
    <property type="term" value="C:extracellular region"/>
    <property type="evidence" value="ECO:0007669"/>
    <property type="project" value="UniProtKB-SubCell"/>
</dbReference>
<dbReference type="GO" id="GO:0044167">
    <property type="term" value="C:host cell endoplasmic reticulum membrane"/>
    <property type="evidence" value="ECO:0007669"/>
    <property type="project" value="UniProtKB-SubCell"/>
</dbReference>
<dbReference type="GO" id="GO:0033650">
    <property type="term" value="C:host cell mitochondrion"/>
    <property type="evidence" value="ECO:0007669"/>
    <property type="project" value="UniProtKB-SubCell"/>
</dbReference>
<dbReference type="GO" id="GO:0042025">
    <property type="term" value="C:host cell nucleus"/>
    <property type="evidence" value="ECO:0007669"/>
    <property type="project" value="UniProtKB-SubCell"/>
</dbReference>
<dbReference type="GO" id="GO:0044220">
    <property type="term" value="C:host cell perinuclear region of cytoplasm"/>
    <property type="evidence" value="ECO:0007669"/>
    <property type="project" value="UniProtKB-SubCell"/>
</dbReference>
<dbReference type="GO" id="GO:0016020">
    <property type="term" value="C:membrane"/>
    <property type="evidence" value="ECO:0007669"/>
    <property type="project" value="UniProtKB-KW"/>
</dbReference>
<dbReference type="GO" id="GO:0019028">
    <property type="term" value="C:viral capsid"/>
    <property type="evidence" value="ECO:0007669"/>
    <property type="project" value="UniProtKB-KW"/>
</dbReference>
<dbReference type="GO" id="GO:0019031">
    <property type="term" value="C:viral envelope"/>
    <property type="evidence" value="ECO:0007669"/>
    <property type="project" value="UniProtKB-KW"/>
</dbReference>
<dbReference type="GO" id="GO:0055036">
    <property type="term" value="C:virion membrane"/>
    <property type="evidence" value="ECO:0007669"/>
    <property type="project" value="UniProtKB-SubCell"/>
</dbReference>
<dbReference type="GO" id="GO:0005524">
    <property type="term" value="F:ATP binding"/>
    <property type="evidence" value="ECO:0007669"/>
    <property type="project" value="UniProtKB-KW"/>
</dbReference>
<dbReference type="GO" id="GO:0016887">
    <property type="term" value="F:ATP hydrolysis activity"/>
    <property type="evidence" value="ECO:0007669"/>
    <property type="project" value="RHEA"/>
</dbReference>
<dbReference type="GO" id="GO:0015267">
    <property type="term" value="F:channel activity"/>
    <property type="evidence" value="ECO:0007669"/>
    <property type="project" value="UniProtKB-KW"/>
</dbReference>
<dbReference type="GO" id="GO:0003725">
    <property type="term" value="F:double-stranded RNA binding"/>
    <property type="evidence" value="ECO:0007669"/>
    <property type="project" value="InterPro"/>
</dbReference>
<dbReference type="GO" id="GO:0046872">
    <property type="term" value="F:metal ion binding"/>
    <property type="evidence" value="ECO:0007669"/>
    <property type="project" value="UniProtKB-KW"/>
</dbReference>
<dbReference type="GO" id="GO:0004483">
    <property type="term" value="F:mRNA (nucleoside-2'-O-)-methyltransferase activity"/>
    <property type="evidence" value="ECO:0007669"/>
    <property type="project" value="UniProtKB-EC"/>
</dbReference>
<dbReference type="GO" id="GO:0004482">
    <property type="term" value="F:mRNA 5'-cap (guanine-N7-)-methyltransferase activity"/>
    <property type="evidence" value="ECO:0007669"/>
    <property type="project" value="UniProtKB-EC"/>
</dbReference>
<dbReference type="GO" id="GO:0046983">
    <property type="term" value="F:protein dimerization activity"/>
    <property type="evidence" value="ECO:0007669"/>
    <property type="project" value="InterPro"/>
</dbReference>
<dbReference type="GO" id="GO:0003724">
    <property type="term" value="F:RNA helicase activity"/>
    <property type="evidence" value="ECO:0007669"/>
    <property type="project" value="UniProtKB-EC"/>
</dbReference>
<dbReference type="GO" id="GO:0003968">
    <property type="term" value="F:RNA-directed RNA polymerase activity"/>
    <property type="evidence" value="ECO:0007669"/>
    <property type="project" value="UniProtKB-KW"/>
</dbReference>
<dbReference type="GO" id="GO:0004252">
    <property type="term" value="F:serine-type endopeptidase activity"/>
    <property type="evidence" value="ECO:0007669"/>
    <property type="project" value="InterPro"/>
</dbReference>
<dbReference type="GO" id="GO:0005198">
    <property type="term" value="F:structural molecule activity"/>
    <property type="evidence" value="ECO:0007669"/>
    <property type="project" value="InterPro"/>
</dbReference>
<dbReference type="GO" id="GO:0075512">
    <property type="term" value="P:clathrin-dependent endocytosis of virus by host cell"/>
    <property type="evidence" value="ECO:0007669"/>
    <property type="project" value="UniProtKB-KW"/>
</dbReference>
<dbReference type="GO" id="GO:0039654">
    <property type="term" value="P:fusion of virus membrane with host endosome membrane"/>
    <property type="evidence" value="ECO:0007669"/>
    <property type="project" value="UniProtKB-KW"/>
</dbReference>
<dbReference type="GO" id="GO:0034220">
    <property type="term" value="P:monoatomic ion transmembrane transport"/>
    <property type="evidence" value="ECO:0007669"/>
    <property type="project" value="UniProtKB-KW"/>
</dbReference>
<dbReference type="GO" id="GO:0006508">
    <property type="term" value="P:proteolysis"/>
    <property type="evidence" value="ECO:0007669"/>
    <property type="project" value="UniProtKB-KW"/>
</dbReference>
<dbReference type="GO" id="GO:0039520">
    <property type="term" value="P:symbiont-mediated activation of host autophagy"/>
    <property type="evidence" value="ECO:0007669"/>
    <property type="project" value="UniProtKB-KW"/>
</dbReference>
<dbReference type="GO" id="GO:0039545">
    <property type="term" value="P:symbiont-mediated suppression of host cytoplasmic pattern recognition receptor signaling pathway via inhibition of MAVS activity"/>
    <property type="evidence" value="ECO:0007669"/>
    <property type="project" value="UniProtKB-KW"/>
</dbReference>
<dbReference type="GO" id="GO:0039574">
    <property type="term" value="P:symbiont-mediated suppression of host JAK-STAT cascade via inhibition of host TYK2 activity"/>
    <property type="evidence" value="ECO:0007669"/>
    <property type="project" value="UniProtKB-KW"/>
</dbReference>
<dbReference type="GO" id="GO:0039564">
    <property type="term" value="P:symbiont-mediated suppression of host JAK-STAT cascade via inhibition of STAT2 activity"/>
    <property type="evidence" value="ECO:0007669"/>
    <property type="project" value="UniProtKB-KW"/>
</dbReference>
<dbReference type="GO" id="GO:0039502">
    <property type="term" value="P:symbiont-mediated suppression of host type I interferon-mediated signaling pathway"/>
    <property type="evidence" value="ECO:0007669"/>
    <property type="project" value="UniProtKB-KW"/>
</dbReference>
<dbReference type="GO" id="GO:0039694">
    <property type="term" value="P:viral RNA genome replication"/>
    <property type="evidence" value="ECO:0007669"/>
    <property type="project" value="InterPro"/>
</dbReference>
<dbReference type="GO" id="GO:0019062">
    <property type="term" value="P:virion attachment to host cell"/>
    <property type="evidence" value="ECO:0007669"/>
    <property type="project" value="UniProtKB-KW"/>
</dbReference>
<dbReference type="CDD" id="cd20761">
    <property type="entry name" value="capping_2-OMTase_Flaviviridae"/>
    <property type="match status" value="1"/>
</dbReference>
<dbReference type="CDD" id="cd17931">
    <property type="entry name" value="DEXHc_viral_Ns3"/>
    <property type="match status" value="1"/>
</dbReference>
<dbReference type="CDD" id="cd12149">
    <property type="entry name" value="Flavi_E_C"/>
    <property type="match status" value="1"/>
</dbReference>
<dbReference type="CDD" id="cd17038">
    <property type="entry name" value="Flavi_M"/>
    <property type="match status" value="1"/>
</dbReference>
<dbReference type="CDD" id="cd23204">
    <property type="entry name" value="Flavivirus_RdRp"/>
    <property type="match status" value="1"/>
</dbReference>
<dbReference type="CDD" id="cd18806">
    <property type="entry name" value="SF2_C_viral"/>
    <property type="match status" value="1"/>
</dbReference>
<dbReference type="FunFam" id="1.20.1280.260:FF:000001">
    <property type="entry name" value="Envelope glycoprotein"/>
    <property type="match status" value="1"/>
</dbReference>
<dbReference type="FunFam" id="2.60.40.350:FF:000001">
    <property type="entry name" value="Envelope glycoprotein"/>
    <property type="match status" value="1"/>
</dbReference>
<dbReference type="FunFam" id="1.10.10.930:FF:000001">
    <property type="entry name" value="Genome polyprotein"/>
    <property type="match status" value="1"/>
</dbReference>
<dbReference type="FunFam" id="2.60.260.50:FF:000001">
    <property type="entry name" value="Genome polyprotein"/>
    <property type="match status" value="1"/>
</dbReference>
<dbReference type="FunFam" id="3.30.70.2840:FF:000001">
    <property type="entry name" value="Genome polyprotein"/>
    <property type="match status" value="1"/>
</dbReference>
<dbReference type="FunFam" id="3.30.70.2840:FF:000002">
    <property type="entry name" value="Genome polyprotein"/>
    <property type="match status" value="1"/>
</dbReference>
<dbReference type="FunFam" id="3.40.50.150:FF:000105">
    <property type="entry name" value="Genome polyprotein"/>
    <property type="match status" value="1"/>
</dbReference>
<dbReference type="FunFam" id="3.40.50.300:FF:000763">
    <property type="entry name" value="Genome polyprotein"/>
    <property type="match status" value="1"/>
</dbReference>
<dbReference type="Gene3D" id="1.10.10.930">
    <property type="match status" value="1"/>
</dbReference>
<dbReference type="Gene3D" id="1.10.260.90">
    <property type="match status" value="1"/>
</dbReference>
<dbReference type="Gene3D" id="1.20.1280.260">
    <property type="match status" value="1"/>
</dbReference>
<dbReference type="Gene3D" id="2.40.10.120">
    <property type="match status" value="2"/>
</dbReference>
<dbReference type="Gene3D" id="2.60.40.350">
    <property type="match status" value="1"/>
</dbReference>
<dbReference type="Gene3D" id="1.10.8.970">
    <property type="entry name" value="Flavivirus envelope glycoprotein M-like"/>
    <property type="match status" value="1"/>
</dbReference>
<dbReference type="Gene3D" id="2.60.260.50">
    <property type="entry name" value="Flavivirus polyprotein propeptide domain"/>
    <property type="match status" value="1"/>
</dbReference>
<dbReference type="Gene3D" id="3.30.70.2840">
    <property type="entry name" value="Flavivirus RNA-directed RNA polymerase, thumb domain"/>
    <property type="match status" value="3"/>
</dbReference>
<dbReference type="Gene3D" id="3.40.50.300">
    <property type="entry name" value="P-loop containing nucleotide triphosphate hydrolases"/>
    <property type="match status" value="2"/>
</dbReference>
<dbReference type="Gene3D" id="2.60.98.10">
    <property type="entry name" value="Tick-borne Encephalitis virus Glycoprotein, domain 1"/>
    <property type="match status" value="1"/>
</dbReference>
<dbReference type="Gene3D" id="2.40.10.10">
    <property type="entry name" value="Trypsin-like serine proteases"/>
    <property type="match status" value="1"/>
</dbReference>
<dbReference type="Gene3D" id="3.40.50.150">
    <property type="entry name" value="Vaccinia Virus protein VP39"/>
    <property type="match status" value="1"/>
</dbReference>
<dbReference type="Gene3D" id="3.30.67.10">
    <property type="entry name" value="Viral Envelope Glycoprotein, domain 2"/>
    <property type="match status" value="1"/>
</dbReference>
<dbReference type="Gene3D" id="3.30.387.10">
    <property type="entry name" value="Viral Envelope Glycoprotein, domain 3"/>
    <property type="match status" value="1"/>
</dbReference>
<dbReference type="InterPro" id="IPR043502">
    <property type="entry name" value="DNA/RNA_pol_sf"/>
</dbReference>
<dbReference type="InterPro" id="IPR000069">
    <property type="entry name" value="Env_glycoprot_M_flavivir"/>
</dbReference>
<dbReference type="InterPro" id="IPR038302">
    <property type="entry name" value="Env_glycoprot_M_sf_flavivir"/>
</dbReference>
<dbReference type="InterPro" id="IPR013755">
    <property type="entry name" value="Flav_gly_cen_dom_subdom1"/>
</dbReference>
<dbReference type="InterPro" id="IPR001122">
    <property type="entry name" value="Flavi_capsidC"/>
</dbReference>
<dbReference type="InterPro" id="IPR037172">
    <property type="entry name" value="Flavi_capsidC_sf"/>
</dbReference>
<dbReference type="InterPro" id="IPR011492">
    <property type="entry name" value="Flavi_DEAD"/>
</dbReference>
<dbReference type="InterPro" id="IPR027287">
    <property type="entry name" value="Flavi_E_Ig-like"/>
</dbReference>
<dbReference type="InterPro" id="IPR026470">
    <property type="entry name" value="Flavi_E_Stem/Anchor_dom"/>
</dbReference>
<dbReference type="InterPro" id="IPR038345">
    <property type="entry name" value="Flavi_E_Stem/Anchor_dom_sf"/>
</dbReference>
<dbReference type="InterPro" id="IPR011998">
    <property type="entry name" value="Flavi_Glycoprot_E_cen/dimer"/>
</dbReference>
<dbReference type="InterPro" id="IPR001157">
    <property type="entry name" value="Flavi_NS1"/>
</dbReference>
<dbReference type="InterPro" id="IPR000752">
    <property type="entry name" value="Flavi_NS2A"/>
</dbReference>
<dbReference type="InterPro" id="IPR000487">
    <property type="entry name" value="Flavi_NS2B"/>
</dbReference>
<dbReference type="InterPro" id="IPR001850">
    <property type="entry name" value="Flavi_NS3_S7"/>
</dbReference>
<dbReference type="InterPro" id="IPR000404">
    <property type="entry name" value="Flavi_NS4A"/>
</dbReference>
<dbReference type="InterPro" id="IPR001528">
    <property type="entry name" value="Flavi_NS4B"/>
</dbReference>
<dbReference type="InterPro" id="IPR046811">
    <property type="entry name" value="Flavi_NS5_thumb"/>
</dbReference>
<dbReference type="InterPro" id="IPR002535">
    <property type="entry name" value="Flavi_propep"/>
</dbReference>
<dbReference type="InterPro" id="IPR038688">
    <property type="entry name" value="Flavi_propep_sf"/>
</dbReference>
<dbReference type="InterPro" id="IPR047530">
    <property type="entry name" value="Flavi_RdRp"/>
</dbReference>
<dbReference type="InterPro" id="IPR000208">
    <property type="entry name" value="Flavi_RdRp_fingers/palm"/>
</dbReference>
<dbReference type="InterPro" id="IPR000336">
    <property type="entry name" value="Flavivir/Alphavir_Ig-like_sf"/>
</dbReference>
<dbReference type="InterPro" id="IPR014412">
    <property type="entry name" value="Gen_Poly_FLV"/>
</dbReference>
<dbReference type="InterPro" id="IPR036253">
    <property type="entry name" value="Glycoprot_cen/dimer_sf"/>
</dbReference>
<dbReference type="InterPro" id="IPR038055">
    <property type="entry name" value="Glycoprot_E_dimer_dom"/>
</dbReference>
<dbReference type="InterPro" id="IPR013756">
    <property type="entry name" value="GlyE_cen_dom_subdom2"/>
</dbReference>
<dbReference type="InterPro" id="IPR014001">
    <property type="entry name" value="Helicase_ATP-bd"/>
</dbReference>
<dbReference type="InterPro" id="IPR001650">
    <property type="entry name" value="Helicase_C-like"/>
</dbReference>
<dbReference type="InterPro" id="IPR014756">
    <property type="entry name" value="Ig_E-set"/>
</dbReference>
<dbReference type="InterPro" id="IPR026490">
    <property type="entry name" value="mRNA_cap_0/1_MeTrfase"/>
</dbReference>
<dbReference type="InterPro" id="IPR049486">
    <property type="entry name" value="NS3-hel_C_flaviviridae"/>
</dbReference>
<dbReference type="InterPro" id="IPR027417">
    <property type="entry name" value="P-loop_NTPase"/>
</dbReference>
<dbReference type="InterPro" id="IPR009003">
    <property type="entry name" value="Peptidase_S1_PA"/>
</dbReference>
<dbReference type="InterPro" id="IPR043504">
    <property type="entry name" value="Peptidase_S1_PA_chymotrypsin"/>
</dbReference>
<dbReference type="InterPro" id="IPR007094">
    <property type="entry name" value="RNA-dir_pol_PSvirus"/>
</dbReference>
<dbReference type="InterPro" id="IPR002877">
    <property type="entry name" value="RNA_MeTrfase_FtsJ_dom"/>
</dbReference>
<dbReference type="InterPro" id="IPR029063">
    <property type="entry name" value="SAM-dependent_MTases_sf"/>
</dbReference>
<dbReference type="NCBIfam" id="TIGR04240">
    <property type="entry name" value="flavi_E_stem"/>
    <property type="match status" value="1"/>
</dbReference>
<dbReference type="Pfam" id="PF20907">
    <property type="entry name" value="Flav_NS3-hel_C"/>
    <property type="match status" value="1"/>
</dbReference>
<dbReference type="Pfam" id="PF01003">
    <property type="entry name" value="Flavi_capsid"/>
    <property type="match status" value="1"/>
</dbReference>
<dbReference type="Pfam" id="PF07652">
    <property type="entry name" value="Flavi_DEAD"/>
    <property type="match status" value="1"/>
</dbReference>
<dbReference type="Pfam" id="PF21659">
    <property type="entry name" value="Flavi_E_stem"/>
    <property type="match status" value="1"/>
</dbReference>
<dbReference type="Pfam" id="PF02832">
    <property type="entry name" value="Flavi_glycop_C"/>
    <property type="match status" value="1"/>
</dbReference>
<dbReference type="Pfam" id="PF00869">
    <property type="entry name" value="Flavi_glycoprot"/>
    <property type="match status" value="1"/>
</dbReference>
<dbReference type="Pfam" id="PF01004">
    <property type="entry name" value="Flavi_M"/>
    <property type="match status" value="1"/>
</dbReference>
<dbReference type="Pfam" id="PF00948">
    <property type="entry name" value="Flavi_NS1"/>
    <property type="match status" value="1"/>
</dbReference>
<dbReference type="Pfam" id="PF01005">
    <property type="entry name" value="Flavi_NS2A"/>
    <property type="match status" value="1"/>
</dbReference>
<dbReference type="Pfam" id="PF01002">
    <property type="entry name" value="Flavi_NS2B"/>
    <property type="match status" value="1"/>
</dbReference>
<dbReference type="Pfam" id="PF01350">
    <property type="entry name" value="Flavi_NS4A"/>
    <property type="match status" value="1"/>
</dbReference>
<dbReference type="Pfam" id="PF01349">
    <property type="entry name" value="Flavi_NS4B"/>
    <property type="match status" value="1"/>
</dbReference>
<dbReference type="Pfam" id="PF00972">
    <property type="entry name" value="Flavi_NS5"/>
    <property type="match status" value="1"/>
</dbReference>
<dbReference type="Pfam" id="PF20483">
    <property type="entry name" value="Flavi_NS5_thumb"/>
    <property type="match status" value="1"/>
</dbReference>
<dbReference type="Pfam" id="PF01570">
    <property type="entry name" value="Flavi_propep"/>
    <property type="match status" value="1"/>
</dbReference>
<dbReference type="Pfam" id="PF01728">
    <property type="entry name" value="FtsJ"/>
    <property type="match status" value="1"/>
</dbReference>
<dbReference type="Pfam" id="PF00949">
    <property type="entry name" value="Peptidase_S7"/>
    <property type="match status" value="1"/>
</dbReference>
<dbReference type="PIRSF" id="PIRSF003817">
    <property type="entry name" value="Gen_Poly_FLV"/>
    <property type="match status" value="1"/>
</dbReference>
<dbReference type="SMART" id="SM00487">
    <property type="entry name" value="DEXDc"/>
    <property type="match status" value="1"/>
</dbReference>
<dbReference type="SMART" id="SM00490">
    <property type="entry name" value="HELICc"/>
    <property type="match status" value="1"/>
</dbReference>
<dbReference type="SUPFAM" id="SSF56672">
    <property type="entry name" value="DNA/RNA polymerases"/>
    <property type="match status" value="1"/>
</dbReference>
<dbReference type="SUPFAM" id="SSF81296">
    <property type="entry name" value="E set domains"/>
    <property type="match status" value="1"/>
</dbReference>
<dbReference type="SUPFAM" id="SSF101257">
    <property type="entry name" value="Flavivirus capsid protein C"/>
    <property type="match status" value="1"/>
</dbReference>
<dbReference type="SUPFAM" id="SSF52540">
    <property type="entry name" value="P-loop containing nucleoside triphosphate hydrolases"/>
    <property type="match status" value="2"/>
</dbReference>
<dbReference type="SUPFAM" id="SSF53335">
    <property type="entry name" value="S-adenosyl-L-methionine-dependent methyltransferases"/>
    <property type="match status" value="1"/>
</dbReference>
<dbReference type="SUPFAM" id="SSF50494">
    <property type="entry name" value="Trypsin-like serine proteases"/>
    <property type="match status" value="1"/>
</dbReference>
<dbReference type="SUPFAM" id="SSF56983">
    <property type="entry name" value="Viral glycoprotein, central and dimerisation domains"/>
    <property type="match status" value="1"/>
</dbReference>
<dbReference type="PROSITE" id="PS51527">
    <property type="entry name" value="FLAVIVIRUS_NS2B"/>
    <property type="match status" value="1"/>
</dbReference>
<dbReference type="PROSITE" id="PS51528">
    <property type="entry name" value="FLAVIVIRUS_NS3PRO"/>
    <property type="match status" value="1"/>
</dbReference>
<dbReference type="PROSITE" id="PS51192">
    <property type="entry name" value="HELICASE_ATP_BIND_1"/>
    <property type="match status" value="1"/>
</dbReference>
<dbReference type="PROSITE" id="PS51194">
    <property type="entry name" value="HELICASE_CTER"/>
    <property type="match status" value="1"/>
</dbReference>
<dbReference type="PROSITE" id="PS50507">
    <property type="entry name" value="RDRP_SSRNA_POS"/>
    <property type="match status" value="1"/>
</dbReference>
<dbReference type="PROSITE" id="PS51591">
    <property type="entry name" value="RNA_CAP01_NS5_MT"/>
    <property type="match status" value="1"/>
</dbReference>
<organismHost>
    <name type="scientific">Aedimorphus</name>
    <dbReference type="NCBI Taxonomy" id="53540"/>
</organismHost>
<organismHost>
    <name type="scientific">Diceromyia</name>
    <dbReference type="NCBI Taxonomy" id="53539"/>
</organismHost>
<organismHost>
    <name type="scientific">Erythrocebus patas</name>
    <name type="common">Red guenon</name>
    <name type="synonym">Cercopithecus patas</name>
    <dbReference type="NCBI Taxonomy" id="9538"/>
</organismHost>
<organismHost>
    <name type="scientific">Homo sapiens</name>
    <name type="common">Human</name>
    <dbReference type="NCBI Taxonomy" id="9606"/>
</organismHost>
<organismHost>
    <name type="scientific">Stegomyia</name>
    <dbReference type="NCBI Taxonomy" id="53541"/>
</organismHost>
<comment type="function">
    <molecule>Capsid protein C</molecule>
    <text evidence="5">Plays a role in virus budding by binding to the cell membrane and gathering the viral RNA into a nucleocapsid that forms the core of a mature virus particle. During virus entry, may induce genome penetration into the host cytoplasm after hemifusion induced by the surface proteins. Can migrate to the cell nucleus where it modulates host functions. Overcomes the anti-viral effects of host EXOC1 by sequestering and degrading the latter through the proteasome degradation pathway.</text>
</comment>
<comment type="function">
    <molecule>Capsid protein C</molecule>
    <text evidence="1">Inhibits RNA silencing by interfering with host Dicer.</text>
</comment>
<comment type="function">
    <molecule>Peptide pr</molecule>
    <text evidence="5">Prevents premature fusion activity of envelope proteins in trans-Golgi by binding to envelope protein E at pH6.0. After virion release in extracellular space, gets dissociated from E dimers.</text>
</comment>
<comment type="function">
    <molecule>Protein prM</molecule>
    <text evidence="5">Acts as a chaperone for envelope protein E during intracellular virion assembly by masking and inactivating envelope protein E fusion peptide. prM is the only viral peptide matured by host furin in the trans-Golgi network probably to avoid catastrophic activation of the viral fusion activity in acidic Golgi compartment prior to virion release. prM-E cleavage is inefficient, and many virions are only partially matured. These uncleaved prM would play a role in immune evasion.</text>
</comment>
<comment type="function">
    <molecule>Small envelope protein M</molecule>
    <text evidence="5">May play a role in virus budding. Exerts cytotoxic effects by activating a mitochondrial apoptotic pathway through M ectodomain. May display a viroporin activity.</text>
</comment>
<comment type="function">
    <molecule>Envelope protein E</molecule>
    <text evidence="5">Binds to host cell surface receptor and mediates fusion between viral and cellular membranes. Envelope protein is synthesized in the endoplasmic reticulum in the form of heterodimer with protein prM. They play a role in virion budding in the ER, and the newly formed immature particle is covered with 60 spikes composed of heterodimer between precursor prM and envelope protein E. The virion is transported to the Golgi apparatus where the low pH causes dissociation of PrM-E heterodimers and formation of E homodimers. prM-E cleavage is inefficient, and many virions are only partially matured. These uncleaved prM would play a role in immune evasion.</text>
</comment>
<comment type="function">
    <molecule>Non-structural protein 1</molecule>
    <text evidence="10">Involved in immune evasion, pathogenesis and viral replication. Once cleaved off the polyprotein, is targeted to three destinations: the viral replication cycle, the plasma membrane and the extracellular compartment. Essential for viral replication. Required for formation of the replication complex and recruitment of other non-structural proteins to the ER-derived membrane structures. Excreted as a hexameric lipoparticle that plays a role against host immune response. Antagonizing the complement function. Binds to the host macrophages and dendritic cells. Inhibits signal transduction originating from Toll-like receptor 3 (TLR3).</text>
</comment>
<comment type="function">
    <molecule>Non-structural protein 1</molecule>
    <text evidence="5">Disrupts the host endothelial glycocalyx layer of host pulmonary microvascular endothelial cells, inducing degradation of sialic acid and shedding of heparan sulfate proteoglycans. NS1 induces expression of sialidases, heparanase, and activates cathepsin L, which activates heparanase via enzymatic cleavage. These effects are probably linked to the endothelial hyperpermeability observed in severe dengue disease.</text>
</comment>
<comment type="function">
    <molecule>Non-structural protein 2A</molecule>
    <text evidence="5">Component of the viral RNA replication complex that functions in virion assembly and antagonizes the host immune response.</text>
</comment>
<comment type="function">
    <molecule>Serine protease subunit NS2B</molecule>
    <text evidence="5 16">Required cofactor for the serine protease function of NS3. May have membrane-destabilizing activity and form viroporins (By similarity).</text>
</comment>
<comment type="function">
    <molecule>Serine protease NS3</molecule>
    <text evidence="17">Displays three enzymatic activities: serine protease, NTPase and RNA helicase. NS3 serine protease, in association with NS2B, performs its autocleavage and cleaves the polyprotein at dibasic sites in the cytoplasm: C-prM, NS2A-NS2B, NS2B-NS3, NS3-NS4A, NS4A-2K and NS4B-NS5. NS3 RNA helicase binds RNA and unwinds dsRNA in the 3' to 5' direction.</text>
</comment>
<comment type="function">
    <molecule>Non-structural protein 4A</molecule>
    <text evidence="5 7 10">Regulates the ATPase activity of the NS3 helicase activity. NS4A allows NS3 helicase to conserve energy during unwinding. Plays a role in the inhibition of the host innate immune response. Interacts with host MAVS and thereby prevents the interaction between RIGI and MAVS. In turn, IFN-beta production is impaired. Interacts with host AUP1 which mediates induction of lipophagy in host cells and facilitates production of virus progeny particles (By similarity).</text>
</comment>
<comment type="function">
    <molecule>Peptide 2k</molecule>
    <text evidence="5">Functions as a signal peptide for NS4B and is required for the interferon antagonism activity of the latter.</text>
</comment>
<comment type="function">
    <molecule>Non-structural protein 4B</molecule>
    <text evidence="10">Induces the formation of ER-derived membrane vesicles where the viral replication takes place. Inhibits interferon (IFN)-induced host STAT1 phosphorylation and nuclear translocation, thereby preventing the establishment of cellular antiviral state by blocking the IFN-alpha/beta pathway.</text>
</comment>
<comment type="function">
    <molecule>RNA-directed RNA polymerase NS5</molecule>
    <text evidence="5">Replicates the viral (+) and (-) RNA genome, and performs the capping of genomes in the cytoplasm. NS5 methylates viral RNA cap at guanine N-7 and ribose 2'-O positions. Besides its role in RNA genome replication, also prevents the establishment of cellular antiviral state by blocking the interferon-alpha/beta (IFN-alpha/beta) signaling pathway. Inhibits host TYK2 and STAT2 phosphorylation, thereby preventing activation of JAK-STAT signaling pathway.</text>
</comment>
<comment type="catalytic activity">
    <reaction>
        <text>Selective hydrolysis of -Xaa-Xaa-|-Yaa- bonds in which each of the Xaa can be either Arg or Lys and Yaa can be either Ser or Ala.</text>
        <dbReference type="EC" id="3.4.21.91"/>
    </reaction>
</comment>
<comment type="catalytic activity">
    <reaction evidence="13">
        <text>RNA(n) + a ribonucleoside 5'-triphosphate = RNA(n+1) + diphosphate</text>
        <dbReference type="Rhea" id="RHEA:21248"/>
        <dbReference type="Rhea" id="RHEA-COMP:14527"/>
        <dbReference type="Rhea" id="RHEA-COMP:17342"/>
        <dbReference type="ChEBI" id="CHEBI:33019"/>
        <dbReference type="ChEBI" id="CHEBI:61557"/>
        <dbReference type="ChEBI" id="CHEBI:140395"/>
        <dbReference type="EC" id="2.7.7.48"/>
    </reaction>
</comment>
<comment type="catalytic activity">
    <reaction>
        <text>a ribonucleoside 5'-triphosphate + H2O = a ribonucleoside 5'-diphosphate + phosphate + H(+)</text>
        <dbReference type="Rhea" id="RHEA:23680"/>
        <dbReference type="ChEBI" id="CHEBI:15377"/>
        <dbReference type="ChEBI" id="CHEBI:15378"/>
        <dbReference type="ChEBI" id="CHEBI:43474"/>
        <dbReference type="ChEBI" id="CHEBI:57930"/>
        <dbReference type="ChEBI" id="CHEBI:61557"/>
        <dbReference type="EC" id="3.6.1.15"/>
    </reaction>
</comment>
<comment type="catalytic activity">
    <reaction>
        <text>ATP + H2O = ADP + phosphate + H(+)</text>
        <dbReference type="Rhea" id="RHEA:13065"/>
        <dbReference type="ChEBI" id="CHEBI:15377"/>
        <dbReference type="ChEBI" id="CHEBI:15378"/>
        <dbReference type="ChEBI" id="CHEBI:30616"/>
        <dbReference type="ChEBI" id="CHEBI:43474"/>
        <dbReference type="ChEBI" id="CHEBI:456216"/>
        <dbReference type="EC" id="3.6.4.13"/>
    </reaction>
</comment>
<comment type="catalytic activity">
    <reaction evidence="18">
        <text>a 5'-end (5'-triphosphoguanosine)-ribonucleoside in mRNA + S-adenosyl-L-methionine = a 5'-end (N(7)-methyl 5'-triphosphoguanosine)-ribonucleoside in mRNA + S-adenosyl-L-homocysteine</text>
        <dbReference type="Rhea" id="RHEA:67008"/>
        <dbReference type="Rhea" id="RHEA-COMP:17166"/>
        <dbReference type="Rhea" id="RHEA-COMP:17167"/>
        <dbReference type="ChEBI" id="CHEBI:57856"/>
        <dbReference type="ChEBI" id="CHEBI:59789"/>
        <dbReference type="ChEBI" id="CHEBI:156461"/>
        <dbReference type="ChEBI" id="CHEBI:167617"/>
        <dbReference type="EC" id="2.1.1.56"/>
    </reaction>
</comment>
<comment type="catalytic activity">
    <reaction evidence="18">
        <text>a 5'-end (N(7)-methyl 5'-triphosphoguanosine)-ribonucleoside in mRNA + S-adenosyl-L-methionine = a 5'-end (N(7)-methyl 5'-triphosphoguanosine)-(2'-O-methyl-ribonucleoside) in mRNA + S-adenosyl-L-homocysteine + H(+)</text>
        <dbReference type="Rhea" id="RHEA:67020"/>
        <dbReference type="Rhea" id="RHEA-COMP:17167"/>
        <dbReference type="Rhea" id="RHEA-COMP:17168"/>
        <dbReference type="ChEBI" id="CHEBI:15378"/>
        <dbReference type="ChEBI" id="CHEBI:57856"/>
        <dbReference type="ChEBI" id="CHEBI:59789"/>
        <dbReference type="ChEBI" id="CHEBI:156461"/>
        <dbReference type="ChEBI" id="CHEBI:167609"/>
        <dbReference type="EC" id="2.1.1.57"/>
    </reaction>
</comment>
<comment type="subunit">
    <molecule>Capsid protein C</molecule>
    <text evidence="5">Homodimer. Interacts (via N-terminus) with host EXOC1 (via C-terminus); this interaction results in EXOC1 degradation through the proteasome degradation pathway.</text>
</comment>
<comment type="subunit">
    <molecule>Protein prM</molecule>
    <text evidence="5">Forms heterodimers with envelope protein E in the endoplasmic reticulum and Golgi.</text>
</comment>
<comment type="subunit">
    <molecule>Envelope protein E</molecule>
    <text evidence="5">Homodimer; in the endoplasmic reticulum and Golgi. Interacts with protein prM. Interacts with non-structural protein 1.</text>
</comment>
<comment type="subunit">
    <molecule>Non-structural protein 1</molecule>
    <text evidence="5">Homodimer; Homohexamer when secreted. Interacts with envelope protein E.</text>
</comment>
<comment type="subunit">
    <molecule>Non-structural protein 2A</molecule>
    <text evidence="5">Interacts (via N-terminus) with serine protease NS3.</text>
</comment>
<comment type="subunit">
    <molecule>Serine protease subunit NS2B</molecule>
    <text evidence="5">Forms a heterodimer with serine protease NS3. May form homooligomers.</text>
</comment>
<comment type="subunit">
    <molecule>Serine protease NS3</molecule>
    <text evidence="5">Forms a heterodimer with NS2B. Interacts with NS4B. Interacts with unphosphorylated RNA-directed RNA polymerase NS5; this interaction stimulates RNA-directed RNA polymerase NS5 guanylyltransferase activity.</text>
</comment>
<comment type="subunit">
    <molecule>Non-structural protein 4A</molecule>
    <text evidence="5 7">Interacts with host MAVS; this interaction inhibits the synthesis of IFN-beta. Interacts with host AUP1; the interaction occurs in the presence of Dengue virus NS4B and induces lipophagy which facilitates production of virus progeny particles (By similarity).</text>
</comment>
<comment type="subunit">
    <molecule>Non-structural protein 4B</molecule>
    <text evidence="5">Interacts with serine protease NS3.</text>
</comment>
<comment type="subunit">
    <molecule>RNA-directed RNA polymerase NS5</molecule>
    <text evidence="5">Homodimer. Interacts with host STAT2; this interaction inhibits the phosphorylation of the latter, and, when all viral proteins are present (polyprotein), targets STAT2 for degradation. Interacts with serine protease NS3.</text>
</comment>
<comment type="subcellular location">
    <molecule>Capsid protein C</molecule>
    <subcellularLocation>
        <location evidence="5">Virion</location>
    </subcellularLocation>
    <subcellularLocation>
        <location evidence="5">Host nucleus</location>
    </subcellularLocation>
    <subcellularLocation>
        <location evidence="5">Host cytoplasm</location>
    </subcellularLocation>
    <subcellularLocation>
        <location evidence="5">Host cytoplasm</location>
        <location evidence="5">Host perinuclear region</location>
    </subcellularLocation>
</comment>
<comment type="subcellular location">
    <molecule>Peptide pr</molecule>
    <subcellularLocation>
        <location evidence="5">Secreted</location>
    </subcellularLocation>
</comment>
<comment type="subcellular location">
    <molecule>Small envelope protein M</molecule>
    <subcellularLocation>
        <location evidence="5">Virion membrane</location>
        <topology evidence="11">Multi-pass membrane protein</topology>
    </subcellularLocation>
    <subcellularLocation>
        <location evidence="5">Host endoplasmic reticulum membrane</location>
        <topology evidence="11">Multi-pass membrane protein</topology>
    </subcellularLocation>
</comment>
<comment type="subcellular location">
    <molecule>Envelope protein E</molecule>
    <subcellularLocation>
        <location evidence="5">Virion membrane</location>
        <topology evidence="11">Multi-pass membrane protein</topology>
    </subcellularLocation>
    <subcellularLocation>
        <location evidence="5">Host endoplasmic reticulum membrane</location>
        <topology evidence="11">Multi-pass membrane protein</topology>
    </subcellularLocation>
</comment>
<comment type="subcellular location">
    <molecule>Non-structural protein 1</molecule>
    <subcellularLocation>
        <location evidence="5">Secreted</location>
    </subcellularLocation>
    <subcellularLocation>
        <location>Host endoplasmic reticulum membrane</location>
        <topology>Peripheral membrane protein</topology>
        <orientation evidence="5">Lumenal side</orientation>
    </subcellularLocation>
    <text evidence="10">Located in RE-derived vesicles hosting the replication complex.</text>
</comment>
<comment type="subcellular location">
    <molecule>Non-structural protein 2A</molecule>
    <subcellularLocation>
        <location evidence="5">Host endoplasmic reticulum membrane</location>
        <topology evidence="5">Multi-pass membrane protein</topology>
    </subcellularLocation>
</comment>
<comment type="subcellular location">
    <molecule>Serine protease subunit NS2B</molecule>
    <subcellularLocation>
        <location>Host endoplasmic reticulum membrane</location>
        <topology evidence="5">Multi-pass membrane protein</topology>
    </subcellularLocation>
</comment>
<comment type="subcellular location">
    <molecule>Serine protease NS3</molecule>
    <subcellularLocation>
        <location evidence="17">Host endoplasmic reticulum membrane</location>
        <topology evidence="17">Peripheral membrane protein</topology>
        <orientation evidence="17">Cytoplasmic side</orientation>
    </subcellularLocation>
    <text evidence="17">Remains non-covalently associated to serine protease subunit NS2B.</text>
</comment>
<comment type="subcellular location">
    <molecule>Non-structural protein 4A</molecule>
    <subcellularLocation>
        <location evidence="5">Host endoplasmic reticulum membrane</location>
        <topology evidence="5">Multi-pass membrane protein</topology>
    </subcellularLocation>
    <subcellularLocation>
        <location evidence="5">Host mitochondrion</location>
    </subcellularLocation>
    <text evidence="5">Located in RE-associated vesicles hosting the replication complex. Interacts with host MAVS in the mitochondrion-associated endoplasmic reticulum membranes.</text>
</comment>
<comment type="subcellular location">
    <molecule>Non-structural protein 4B</molecule>
    <subcellularLocation>
        <location evidence="5">Host endoplasmic reticulum membrane</location>
        <topology evidence="5">Multi-pass membrane protein</topology>
    </subcellularLocation>
    <text evidence="10">Located in RE-derived vesicles hosting the replication complex.</text>
</comment>
<comment type="subcellular location">
    <molecule>RNA-directed RNA polymerase NS5</molecule>
    <subcellularLocation>
        <location>Host endoplasmic reticulum membrane</location>
        <topology>Peripheral membrane protein</topology>
        <orientation>Cytoplasmic side</orientation>
    </subcellularLocation>
    <subcellularLocation>
        <location evidence="5">Host nucleus</location>
    </subcellularLocation>
    <text evidence="5">Located in RE-associated vesicles hosting the replication complex. NS5 protein is mainly localized in the nucleus rather than in ER vesicles, especially in the DENV 2, 3, 4 serotypes.</text>
</comment>
<comment type="domain">
    <text evidence="5">The transmembrane domains of the small envelope protein M and envelope protein E contain an endoplasmic reticulum retention signal.</text>
</comment>
<comment type="PTM">
    <molecule>Genome polyprotein</molecule>
    <text evidence="5">Specific enzymatic cleavages in vivo yield mature proteins. Cleavages in the lumen of endoplasmic reticulum are performed by host signal peptidase, whereas cleavages in the cytoplasmic side are performed by serine protease NS3. Signal cleavage at the 2K-4B site requires a prior NS3 protease-mediated cleavage at the 4A-2K site.</text>
</comment>
<comment type="PTM">
    <molecule>Protein prM</molecule>
    <text evidence="5">Cleaved in post-Golgi vesicles by a host furin, releasing the mature small envelope protein M, and peptide pr. This cleavage is incomplete as up to 30% of viral particles still carry uncleaved prM.</text>
</comment>
<comment type="PTM">
    <molecule>Envelope protein E</molecule>
    <text evidence="5">N-glycosylated.</text>
</comment>
<comment type="PTM">
    <molecule>Non-structural protein 1</molecule>
    <text evidence="5">N-glycosylated. The excreted form is glycosylated and this is required for efficient secretion of the protein from infected cells.</text>
</comment>
<comment type="PTM">
    <molecule>Serine protease NS3</molecule>
    <text evidence="8">Acetylated by host KAT5. Acetylation modulates NS3 RNA-binding and unwinding activities and plays an important positive role for viral replication.</text>
</comment>
<comment type="PTM">
    <molecule>RNA-directed RNA polymerase NS5</molecule>
    <text evidence="6">Sumoylation of RNA-directed RNA polymerase NS5 increases NS5 protein stability allowing proper viral RNA replication.</text>
</comment>
<comment type="PTM">
    <molecule>RNA-directed RNA polymerase NS5</molecule>
    <text evidence="5">Phosphorylated on serines residues. This phosphorylation may trigger NS5 nuclear localization.</text>
</comment>
<comment type="similarity">
    <text evidence="18">In the N-terminal section; belongs to the class I-like SAM-binding methyltransferase superfamily. mRNA cap 0-1 NS5-type methyltransferase family.</text>
</comment>
<reference key="1">
    <citation type="submission" date="2000-10" db="EMBL/GenBank/DDBJ databases">
        <title>Complete sequence of dengue virus type 3 strain 80-2 isolated from Guangxi China.</title>
        <authorList>
            <person name="Yuan X."/>
            <person name="Geng L."/>
            <person name="Li X."/>
            <person name="Yu M."/>
            <person name="Qin E."/>
        </authorList>
    </citation>
    <scope>NUCLEOTIDE SEQUENCE [GENOMIC RNA]</scope>
</reference>